<accession>A8H549</accession>
<proteinExistence type="inferred from homology"/>
<reference key="1">
    <citation type="submission" date="2007-10" db="EMBL/GenBank/DDBJ databases">
        <title>Complete sequence of Shewanella pealeana ATCC 700345.</title>
        <authorList>
            <consortium name="US DOE Joint Genome Institute"/>
            <person name="Copeland A."/>
            <person name="Lucas S."/>
            <person name="Lapidus A."/>
            <person name="Barry K."/>
            <person name="Glavina del Rio T."/>
            <person name="Dalin E."/>
            <person name="Tice H."/>
            <person name="Pitluck S."/>
            <person name="Chertkov O."/>
            <person name="Brettin T."/>
            <person name="Bruce D."/>
            <person name="Detter J.C."/>
            <person name="Han C."/>
            <person name="Schmutz J."/>
            <person name="Larimer F."/>
            <person name="Land M."/>
            <person name="Hauser L."/>
            <person name="Kyrpides N."/>
            <person name="Kim E."/>
            <person name="Zhao J.-S.Z."/>
            <person name="Manno D."/>
            <person name="Hawari J."/>
            <person name="Richardson P."/>
        </authorList>
    </citation>
    <scope>NUCLEOTIDE SEQUENCE [LARGE SCALE GENOMIC DNA]</scope>
    <source>
        <strain>ATCC 700345 / ANG-SQ1</strain>
    </source>
</reference>
<feature type="chain" id="PRO_1000074722" description="Aspartate--tRNA ligase">
    <location>
        <begin position="1"/>
        <end position="597"/>
    </location>
</feature>
<feature type="region of interest" description="Aspartate" evidence="1">
    <location>
        <begin position="197"/>
        <end position="200"/>
    </location>
</feature>
<feature type="binding site" evidence="1">
    <location>
        <position position="173"/>
    </location>
    <ligand>
        <name>L-aspartate</name>
        <dbReference type="ChEBI" id="CHEBI:29991"/>
    </ligand>
</feature>
<feature type="binding site" evidence="1">
    <location>
        <begin position="219"/>
        <end position="221"/>
    </location>
    <ligand>
        <name>ATP</name>
        <dbReference type="ChEBI" id="CHEBI:30616"/>
    </ligand>
</feature>
<feature type="binding site" evidence="1">
    <location>
        <position position="219"/>
    </location>
    <ligand>
        <name>L-aspartate</name>
        <dbReference type="ChEBI" id="CHEBI:29991"/>
    </ligand>
</feature>
<feature type="binding site" evidence="1">
    <location>
        <position position="228"/>
    </location>
    <ligand>
        <name>ATP</name>
        <dbReference type="ChEBI" id="CHEBI:30616"/>
    </ligand>
</feature>
<feature type="binding site" evidence="1">
    <location>
        <position position="449"/>
    </location>
    <ligand>
        <name>L-aspartate</name>
        <dbReference type="ChEBI" id="CHEBI:29991"/>
    </ligand>
</feature>
<feature type="binding site" evidence="1">
    <location>
        <position position="483"/>
    </location>
    <ligand>
        <name>ATP</name>
        <dbReference type="ChEBI" id="CHEBI:30616"/>
    </ligand>
</feature>
<feature type="binding site" evidence="1">
    <location>
        <position position="490"/>
    </location>
    <ligand>
        <name>L-aspartate</name>
        <dbReference type="ChEBI" id="CHEBI:29991"/>
    </ligand>
</feature>
<feature type="binding site" evidence="1">
    <location>
        <begin position="535"/>
        <end position="538"/>
    </location>
    <ligand>
        <name>ATP</name>
        <dbReference type="ChEBI" id="CHEBI:30616"/>
    </ligand>
</feature>
<sequence>MRSHYCGDVNKSHVGQEVTLVGWVNRSRDLGGVVFLDLRDREGIVQVVYDPDLPEVFDVASTLRSEFCVQIKGLVRARPDSQINADMRTGEVEILGLELTILNSSAPLPINMDKNQHNTEEQRLKYRYLDLRRPEMADRIVFRSKVTSAVRRFLDGNGFLDIETPILTKATPEGARDYLVPSRTYKGQFFALPQSPQLFKQLLMMSGFDRYYQIVKCFRDEDLRADRQPEFTQIDIETSFMTSAQVMDKTEEMVRGLFKELLNVDLGEFPKMTFEEAMRRFGSDKPDLRNPLELIDVADIVKEVEFAVFNGPANDPEGRVAVLSIPGGAKLSRKQLDEYAKYVTIYGAKGLAWMKVNDLAQGMEGIQSPVLKFLSEDVVNALLERTGAQTGDLILFGADKANIVAEAMGALRLKAGEDFDLLQGEWKPLWVVDFPMFERTSDGGLHAMHHPFTAPSNMTPEELEANPIGAISDAYDMVLNGCELGGGSVRIHDSKMQSAVFRILGINDEEASEKFGFLLEALRYGTPPHAGLAFGLDRIIMLMTGASSIRDVMAFPKTTTAACPLTNAPGFANPVQLAELGVSVVEAEPKADAKDTE</sequence>
<name>SYD_SHEPA</name>
<protein>
    <recommendedName>
        <fullName evidence="1">Aspartate--tRNA ligase</fullName>
        <ecNumber evidence="1">6.1.1.12</ecNumber>
    </recommendedName>
    <alternativeName>
        <fullName evidence="1">Aspartyl-tRNA synthetase</fullName>
        <shortName evidence="1">AspRS</shortName>
    </alternativeName>
</protein>
<comment type="function">
    <text evidence="1">Catalyzes the attachment of L-aspartate to tRNA(Asp) in a two-step reaction: L-aspartate is first activated by ATP to form Asp-AMP and then transferred to the acceptor end of tRNA(Asp).</text>
</comment>
<comment type="catalytic activity">
    <reaction evidence="1">
        <text>tRNA(Asp) + L-aspartate + ATP = L-aspartyl-tRNA(Asp) + AMP + diphosphate</text>
        <dbReference type="Rhea" id="RHEA:19649"/>
        <dbReference type="Rhea" id="RHEA-COMP:9660"/>
        <dbReference type="Rhea" id="RHEA-COMP:9678"/>
        <dbReference type="ChEBI" id="CHEBI:29991"/>
        <dbReference type="ChEBI" id="CHEBI:30616"/>
        <dbReference type="ChEBI" id="CHEBI:33019"/>
        <dbReference type="ChEBI" id="CHEBI:78442"/>
        <dbReference type="ChEBI" id="CHEBI:78516"/>
        <dbReference type="ChEBI" id="CHEBI:456215"/>
        <dbReference type="EC" id="6.1.1.12"/>
    </reaction>
</comment>
<comment type="subunit">
    <text evidence="1">Homodimer.</text>
</comment>
<comment type="subcellular location">
    <subcellularLocation>
        <location evidence="1">Cytoplasm</location>
    </subcellularLocation>
</comment>
<comment type="similarity">
    <text evidence="1">Belongs to the class-II aminoacyl-tRNA synthetase family. Type 1 subfamily.</text>
</comment>
<organism>
    <name type="scientific">Shewanella pealeana (strain ATCC 700345 / ANG-SQ1)</name>
    <dbReference type="NCBI Taxonomy" id="398579"/>
    <lineage>
        <taxon>Bacteria</taxon>
        <taxon>Pseudomonadati</taxon>
        <taxon>Pseudomonadota</taxon>
        <taxon>Gammaproteobacteria</taxon>
        <taxon>Alteromonadales</taxon>
        <taxon>Shewanellaceae</taxon>
        <taxon>Shewanella</taxon>
    </lineage>
</organism>
<evidence type="ECO:0000255" key="1">
    <source>
        <dbReference type="HAMAP-Rule" id="MF_00044"/>
    </source>
</evidence>
<keyword id="KW-0030">Aminoacyl-tRNA synthetase</keyword>
<keyword id="KW-0067">ATP-binding</keyword>
<keyword id="KW-0963">Cytoplasm</keyword>
<keyword id="KW-0436">Ligase</keyword>
<keyword id="KW-0547">Nucleotide-binding</keyword>
<keyword id="KW-0648">Protein biosynthesis</keyword>
<keyword id="KW-1185">Reference proteome</keyword>
<gene>
    <name evidence="1" type="primary">aspS</name>
    <name type="ordered locus">Spea_2366</name>
</gene>
<dbReference type="EC" id="6.1.1.12" evidence="1"/>
<dbReference type="EMBL" id="CP000851">
    <property type="protein sequence ID" value="ABV87686.1"/>
    <property type="molecule type" value="Genomic_DNA"/>
</dbReference>
<dbReference type="RefSeq" id="WP_012155600.1">
    <property type="nucleotide sequence ID" value="NC_009901.1"/>
</dbReference>
<dbReference type="SMR" id="A8H549"/>
<dbReference type="STRING" id="398579.Spea_2366"/>
<dbReference type="KEGG" id="spl:Spea_2366"/>
<dbReference type="eggNOG" id="COG0173">
    <property type="taxonomic scope" value="Bacteria"/>
</dbReference>
<dbReference type="HOGENOM" id="CLU_014330_3_2_6"/>
<dbReference type="OrthoDB" id="9802326at2"/>
<dbReference type="Proteomes" id="UP000002608">
    <property type="component" value="Chromosome"/>
</dbReference>
<dbReference type="GO" id="GO:0005737">
    <property type="term" value="C:cytoplasm"/>
    <property type="evidence" value="ECO:0007669"/>
    <property type="project" value="UniProtKB-SubCell"/>
</dbReference>
<dbReference type="GO" id="GO:0004815">
    <property type="term" value="F:aspartate-tRNA ligase activity"/>
    <property type="evidence" value="ECO:0007669"/>
    <property type="project" value="UniProtKB-UniRule"/>
</dbReference>
<dbReference type="GO" id="GO:0005524">
    <property type="term" value="F:ATP binding"/>
    <property type="evidence" value="ECO:0007669"/>
    <property type="project" value="UniProtKB-UniRule"/>
</dbReference>
<dbReference type="GO" id="GO:0003676">
    <property type="term" value="F:nucleic acid binding"/>
    <property type="evidence" value="ECO:0007669"/>
    <property type="project" value="InterPro"/>
</dbReference>
<dbReference type="GO" id="GO:0006422">
    <property type="term" value="P:aspartyl-tRNA aminoacylation"/>
    <property type="evidence" value="ECO:0007669"/>
    <property type="project" value="UniProtKB-UniRule"/>
</dbReference>
<dbReference type="CDD" id="cd00777">
    <property type="entry name" value="AspRS_core"/>
    <property type="match status" value="1"/>
</dbReference>
<dbReference type="CDD" id="cd04317">
    <property type="entry name" value="EcAspRS_like_N"/>
    <property type="match status" value="1"/>
</dbReference>
<dbReference type="FunFam" id="2.40.50.140:FF:000080">
    <property type="entry name" value="Aspartate--tRNA ligase"/>
    <property type="match status" value="1"/>
</dbReference>
<dbReference type="Gene3D" id="3.30.930.10">
    <property type="entry name" value="Bira Bifunctional Protein, Domain 2"/>
    <property type="match status" value="1"/>
</dbReference>
<dbReference type="Gene3D" id="3.30.1360.30">
    <property type="entry name" value="GAD-like domain"/>
    <property type="match status" value="1"/>
</dbReference>
<dbReference type="Gene3D" id="2.40.50.140">
    <property type="entry name" value="Nucleic acid-binding proteins"/>
    <property type="match status" value="1"/>
</dbReference>
<dbReference type="HAMAP" id="MF_00044">
    <property type="entry name" value="Asp_tRNA_synth_type1"/>
    <property type="match status" value="1"/>
</dbReference>
<dbReference type="InterPro" id="IPR004364">
    <property type="entry name" value="Aa-tRNA-synt_II"/>
</dbReference>
<dbReference type="InterPro" id="IPR006195">
    <property type="entry name" value="aa-tRNA-synth_II"/>
</dbReference>
<dbReference type="InterPro" id="IPR045864">
    <property type="entry name" value="aa-tRNA-synth_II/BPL/LPL"/>
</dbReference>
<dbReference type="InterPro" id="IPR004524">
    <property type="entry name" value="Asp-tRNA-ligase_1"/>
</dbReference>
<dbReference type="InterPro" id="IPR047089">
    <property type="entry name" value="Asp-tRNA-ligase_1_N"/>
</dbReference>
<dbReference type="InterPro" id="IPR002312">
    <property type="entry name" value="Asp/Asn-tRNA-synth_IIb"/>
</dbReference>
<dbReference type="InterPro" id="IPR047090">
    <property type="entry name" value="AspRS_core"/>
</dbReference>
<dbReference type="InterPro" id="IPR004115">
    <property type="entry name" value="GAD-like_sf"/>
</dbReference>
<dbReference type="InterPro" id="IPR029351">
    <property type="entry name" value="GAD_dom"/>
</dbReference>
<dbReference type="InterPro" id="IPR012340">
    <property type="entry name" value="NA-bd_OB-fold"/>
</dbReference>
<dbReference type="InterPro" id="IPR004365">
    <property type="entry name" value="NA-bd_OB_tRNA"/>
</dbReference>
<dbReference type="NCBIfam" id="TIGR00459">
    <property type="entry name" value="aspS_bact"/>
    <property type="match status" value="1"/>
</dbReference>
<dbReference type="NCBIfam" id="NF001750">
    <property type="entry name" value="PRK00476.1"/>
    <property type="match status" value="1"/>
</dbReference>
<dbReference type="PANTHER" id="PTHR22594:SF5">
    <property type="entry name" value="ASPARTATE--TRNA LIGASE, MITOCHONDRIAL"/>
    <property type="match status" value="1"/>
</dbReference>
<dbReference type="PANTHER" id="PTHR22594">
    <property type="entry name" value="ASPARTYL/LYSYL-TRNA SYNTHETASE"/>
    <property type="match status" value="1"/>
</dbReference>
<dbReference type="Pfam" id="PF02938">
    <property type="entry name" value="GAD"/>
    <property type="match status" value="1"/>
</dbReference>
<dbReference type="Pfam" id="PF00152">
    <property type="entry name" value="tRNA-synt_2"/>
    <property type="match status" value="1"/>
</dbReference>
<dbReference type="Pfam" id="PF01336">
    <property type="entry name" value="tRNA_anti-codon"/>
    <property type="match status" value="1"/>
</dbReference>
<dbReference type="PRINTS" id="PR01042">
    <property type="entry name" value="TRNASYNTHASP"/>
</dbReference>
<dbReference type="SUPFAM" id="SSF55681">
    <property type="entry name" value="Class II aaRS and biotin synthetases"/>
    <property type="match status" value="1"/>
</dbReference>
<dbReference type="SUPFAM" id="SSF55261">
    <property type="entry name" value="GAD domain-like"/>
    <property type="match status" value="1"/>
</dbReference>
<dbReference type="SUPFAM" id="SSF50249">
    <property type="entry name" value="Nucleic acid-binding proteins"/>
    <property type="match status" value="1"/>
</dbReference>
<dbReference type="PROSITE" id="PS50862">
    <property type="entry name" value="AA_TRNA_LIGASE_II"/>
    <property type="match status" value="1"/>
</dbReference>